<organism>
    <name type="scientific">Phaeosphaeria nodorum (strain SN15 / ATCC MYA-4574 / FGSC 10173)</name>
    <name type="common">Glume blotch fungus</name>
    <name type="synonym">Parastagonospora nodorum</name>
    <dbReference type="NCBI Taxonomy" id="321614"/>
    <lineage>
        <taxon>Eukaryota</taxon>
        <taxon>Fungi</taxon>
        <taxon>Dikarya</taxon>
        <taxon>Ascomycota</taxon>
        <taxon>Pezizomycotina</taxon>
        <taxon>Dothideomycetes</taxon>
        <taxon>Pleosporomycetidae</taxon>
        <taxon>Pleosporales</taxon>
        <taxon>Pleosporineae</taxon>
        <taxon>Phaeosphaeriaceae</taxon>
        <taxon>Parastagonospora</taxon>
    </lineage>
</organism>
<evidence type="ECO:0000255" key="1">
    <source>
        <dbReference type="HAMAP-Rule" id="MF_03101"/>
    </source>
</evidence>
<accession>Q0UHL8</accession>
<sequence>MAVTEQDTQVPTLRKIVTSESEPLARRFRALFSLKHLASLQPPTEQTVPAIEAIAAAFSSPSALLKHELAYCLGQSGHDAAIAPLRGVLEDKDEDSMCRHEAAEALGALSDKGSLELLKKMRDDANEVDVVRETCDIAVDRIEWEHGLQKGTEKLKKSDFTSVDPAPPMPESNEAPSIPALEKTLLDTTLPLFQRYRAMFALRDLSSPPDLPTAVPAVHALARGFGDPSALFRHEIAFVFGQLSHPASIPSLTEALSNTKEASMVRHEAAEALGSLGDEEGVEETLKKFLNDPEQVVRDSVIVALDMAEFEKNGEVEYAIVPQAQAIAA</sequence>
<dbReference type="EC" id="1.14.99.29" evidence="1"/>
<dbReference type="EMBL" id="CH445337">
    <property type="protein sequence ID" value="EAT83914.1"/>
    <property type="molecule type" value="Genomic_DNA"/>
</dbReference>
<dbReference type="RefSeq" id="XP_001799054.1">
    <property type="nucleotide sequence ID" value="XM_001799002.1"/>
</dbReference>
<dbReference type="SMR" id="Q0UHL8"/>
<dbReference type="FunCoup" id="Q0UHL8">
    <property type="interactions" value="842"/>
</dbReference>
<dbReference type="STRING" id="321614.Q0UHL8"/>
<dbReference type="EnsemblFungi" id="SNOT_08746">
    <property type="protein sequence ID" value="SNOT_08746"/>
    <property type="gene ID" value="SNOG_08746"/>
</dbReference>
<dbReference type="GeneID" id="5975953"/>
<dbReference type="KEGG" id="pno:SNOG_08746"/>
<dbReference type="VEuPathDB" id="FungiDB:JI435_087460"/>
<dbReference type="eggNOG" id="KOG0567">
    <property type="taxonomic scope" value="Eukaryota"/>
</dbReference>
<dbReference type="HOGENOM" id="CLU_053974_0_0_1"/>
<dbReference type="InParanoid" id="Q0UHL8"/>
<dbReference type="OMA" id="LQEPCSI"/>
<dbReference type="OrthoDB" id="421002at2759"/>
<dbReference type="UniPathway" id="UPA00354"/>
<dbReference type="Proteomes" id="UP000001055">
    <property type="component" value="Unassembled WGS sequence"/>
</dbReference>
<dbReference type="GO" id="GO:0005737">
    <property type="term" value="C:cytoplasm"/>
    <property type="evidence" value="ECO:0007669"/>
    <property type="project" value="UniProtKB-SubCell"/>
</dbReference>
<dbReference type="GO" id="GO:0005634">
    <property type="term" value="C:nucleus"/>
    <property type="evidence" value="ECO:0007669"/>
    <property type="project" value="UniProtKB-SubCell"/>
</dbReference>
<dbReference type="GO" id="GO:0019135">
    <property type="term" value="F:deoxyhypusine monooxygenase activity"/>
    <property type="evidence" value="ECO:0000318"/>
    <property type="project" value="GO_Central"/>
</dbReference>
<dbReference type="GO" id="GO:0046872">
    <property type="term" value="F:metal ion binding"/>
    <property type="evidence" value="ECO:0007669"/>
    <property type="project" value="UniProtKB-KW"/>
</dbReference>
<dbReference type="Gene3D" id="1.25.10.10">
    <property type="entry name" value="Leucine-rich Repeat Variant"/>
    <property type="match status" value="2"/>
</dbReference>
<dbReference type="HAMAP" id="MF_03101">
    <property type="entry name" value="Deoxyhypusine_hydroxylase"/>
    <property type="match status" value="1"/>
</dbReference>
<dbReference type="InterPro" id="IPR011989">
    <property type="entry name" value="ARM-like"/>
</dbReference>
<dbReference type="InterPro" id="IPR016024">
    <property type="entry name" value="ARM-type_fold"/>
</dbReference>
<dbReference type="InterPro" id="IPR027517">
    <property type="entry name" value="Deoxyhypusine_hydroxylase"/>
</dbReference>
<dbReference type="InterPro" id="IPR004155">
    <property type="entry name" value="PBS_lyase_HEAT"/>
</dbReference>
<dbReference type="PANTHER" id="PTHR12697:SF5">
    <property type="entry name" value="DEOXYHYPUSINE HYDROXYLASE"/>
    <property type="match status" value="1"/>
</dbReference>
<dbReference type="PANTHER" id="PTHR12697">
    <property type="entry name" value="PBS LYASE HEAT-LIKE PROTEIN"/>
    <property type="match status" value="1"/>
</dbReference>
<dbReference type="Pfam" id="PF13646">
    <property type="entry name" value="HEAT_2"/>
    <property type="match status" value="2"/>
</dbReference>
<dbReference type="SMART" id="SM00567">
    <property type="entry name" value="EZ_HEAT"/>
    <property type="match status" value="6"/>
</dbReference>
<dbReference type="SUPFAM" id="SSF48371">
    <property type="entry name" value="ARM repeat"/>
    <property type="match status" value="1"/>
</dbReference>
<protein>
    <recommendedName>
        <fullName evidence="1">Deoxyhypusine hydroxylase</fullName>
        <shortName evidence="1">DOHH</shortName>
        <ecNumber evidence="1">1.14.99.29</ecNumber>
    </recommendedName>
    <alternativeName>
        <fullName evidence="1">Deoxyhypusine dioxygenase</fullName>
    </alternativeName>
    <alternativeName>
        <fullName evidence="1">Deoxyhypusine monooxygenase</fullName>
    </alternativeName>
</protein>
<keyword id="KW-0963">Cytoplasm</keyword>
<keyword id="KW-0386">Hypusine biosynthesis</keyword>
<keyword id="KW-0408">Iron</keyword>
<keyword id="KW-0479">Metal-binding</keyword>
<keyword id="KW-0503">Monooxygenase</keyword>
<keyword id="KW-0539">Nucleus</keyword>
<keyword id="KW-0560">Oxidoreductase</keyword>
<keyword id="KW-0677">Repeat</keyword>
<feature type="chain" id="PRO_0000283671" description="Deoxyhypusine hydroxylase">
    <location>
        <begin position="1"/>
        <end position="329"/>
    </location>
</feature>
<feature type="repeat" description="HEAT-like PBS-type 1">
    <location>
        <begin position="65"/>
        <end position="91"/>
    </location>
</feature>
<feature type="repeat" description="HEAT-like PBS-type 2">
    <location>
        <begin position="99"/>
        <end position="124"/>
    </location>
</feature>
<feature type="repeat" description="HEAT-like PBS-type 3">
    <location>
        <begin position="232"/>
        <end position="258"/>
    </location>
</feature>
<feature type="repeat" description="HEAT-like PBS-type 4">
    <location>
        <begin position="265"/>
        <end position="292"/>
    </location>
</feature>
<feature type="binding site" evidence="1">
    <location>
        <position position="67"/>
    </location>
    <ligand>
        <name>Fe cation</name>
        <dbReference type="ChEBI" id="CHEBI:24875"/>
        <label>1</label>
    </ligand>
</feature>
<feature type="binding site" evidence="1">
    <location>
        <position position="68"/>
    </location>
    <ligand>
        <name>Fe cation</name>
        <dbReference type="ChEBI" id="CHEBI:24875"/>
        <label>1</label>
    </ligand>
</feature>
<feature type="binding site" evidence="1">
    <location>
        <position position="100"/>
    </location>
    <ligand>
        <name>Fe cation</name>
        <dbReference type="ChEBI" id="CHEBI:24875"/>
        <label>1</label>
    </ligand>
</feature>
<feature type="binding site" evidence="1">
    <location>
        <position position="101"/>
    </location>
    <ligand>
        <name>Fe cation</name>
        <dbReference type="ChEBI" id="CHEBI:24875"/>
        <label>1</label>
    </ligand>
</feature>
<feature type="binding site" evidence="1">
    <location>
        <position position="234"/>
    </location>
    <ligand>
        <name>Fe cation</name>
        <dbReference type="ChEBI" id="CHEBI:24875"/>
        <label>2</label>
    </ligand>
</feature>
<feature type="binding site" evidence="1">
    <location>
        <position position="235"/>
    </location>
    <ligand>
        <name>Fe cation</name>
        <dbReference type="ChEBI" id="CHEBI:24875"/>
        <label>2</label>
    </ligand>
</feature>
<feature type="binding site" evidence="1">
    <location>
        <position position="267"/>
    </location>
    <ligand>
        <name>Fe cation</name>
        <dbReference type="ChEBI" id="CHEBI:24875"/>
        <label>2</label>
    </ligand>
</feature>
<feature type="binding site" evidence="1">
    <location>
        <position position="268"/>
    </location>
    <ligand>
        <name>Fe cation</name>
        <dbReference type="ChEBI" id="CHEBI:24875"/>
        <label>2</label>
    </ligand>
</feature>
<gene>
    <name evidence="1" type="primary">LIA1</name>
    <name type="ORF">SNOG_08746</name>
</gene>
<reference key="1">
    <citation type="journal article" date="2007" name="Plant Cell">
        <title>Dothideomycete-plant interactions illuminated by genome sequencing and EST analysis of the wheat pathogen Stagonospora nodorum.</title>
        <authorList>
            <person name="Hane J.K."/>
            <person name="Lowe R.G.T."/>
            <person name="Solomon P.S."/>
            <person name="Tan K.-C."/>
            <person name="Schoch C.L."/>
            <person name="Spatafora J.W."/>
            <person name="Crous P.W."/>
            <person name="Kodira C.D."/>
            <person name="Birren B.W."/>
            <person name="Galagan J.E."/>
            <person name="Torriani S.F.F."/>
            <person name="McDonald B.A."/>
            <person name="Oliver R.P."/>
        </authorList>
    </citation>
    <scope>NUCLEOTIDE SEQUENCE [LARGE SCALE GENOMIC DNA]</scope>
    <source>
        <strain>SN15 / ATCC MYA-4574 / FGSC 10173</strain>
    </source>
</reference>
<name>DOHH_PHANO</name>
<comment type="function">
    <text evidence="1">Catalyzes the hydroxylation of the N(6)-(4-aminobutyl)-L-lysine intermediate to form hypusine, an essential post-translational modification only found in mature eIF-5A factor.</text>
</comment>
<comment type="catalytic activity">
    <reaction evidence="1">
        <text>[eIF5A protein]-deoxyhypusine + AH2 + O2 = [eIF5A protein]-hypusine + A + H2O</text>
        <dbReference type="Rhea" id="RHEA:14101"/>
        <dbReference type="Rhea" id="RHEA-COMP:10144"/>
        <dbReference type="Rhea" id="RHEA-COMP:12592"/>
        <dbReference type="ChEBI" id="CHEBI:13193"/>
        <dbReference type="ChEBI" id="CHEBI:15377"/>
        <dbReference type="ChEBI" id="CHEBI:15379"/>
        <dbReference type="ChEBI" id="CHEBI:17499"/>
        <dbReference type="ChEBI" id="CHEBI:82657"/>
        <dbReference type="ChEBI" id="CHEBI:91175"/>
        <dbReference type="EC" id="1.14.99.29"/>
    </reaction>
</comment>
<comment type="cofactor">
    <cofactor evidence="1">
        <name>Fe(2+)</name>
        <dbReference type="ChEBI" id="CHEBI:29033"/>
    </cofactor>
    <text evidence="1">Binds 2 Fe(2+) ions per subunit.</text>
</comment>
<comment type="pathway">
    <text evidence="1">Protein modification; eIF5A hypusination.</text>
</comment>
<comment type="subcellular location">
    <subcellularLocation>
        <location evidence="1">Cytoplasm</location>
    </subcellularLocation>
    <subcellularLocation>
        <location evidence="1">Nucleus</location>
    </subcellularLocation>
</comment>
<comment type="similarity">
    <text evidence="1">Belongs to the deoxyhypusine hydroxylase family.</text>
</comment>
<proteinExistence type="inferred from homology"/>